<comment type="function">
    <text evidence="1">Required for the first step of diphthamide biosynthesis, a post-translational modification of histidine which occurs in elongation factor 2. DPH1 and DPH2 transfer a 3-amino-3-carboxypropyl (ACP) group from S-adenosyl-L-methionine (SAM) to a histidine residue, the reaction is assisted by a reduction system comprising DPH3 and a NADH-dependent reductase, predominantly CBR1 (By similarity). Facilitates the reduction of the catalytic iron-sulfur cluster found in the DPH1 subunit (By similarity).</text>
</comment>
<comment type="cofactor">
    <cofactor evidence="1">
        <name>[4Fe-4S] cluster</name>
        <dbReference type="ChEBI" id="CHEBI:49883"/>
    </cofactor>
    <text evidence="1">Binds 1 [4Fe-4S] cluster per subunit. The cluster facilitates the reduction of the catalytic iron-sulfur cluster in the DPH1 subunit.</text>
</comment>
<comment type="pathway">
    <text evidence="1">Protein modification; peptidyl-diphthamide biosynthesis.</text>
</comment>
<comment type="subunit">
    <text evidence="1">Component of the 2-(3-amino-3-carboxypropyl)histidine synthase complex composed of DPH1, DPH2, DPH3 and a NADH-dependent reductase, predominantly CBR1.</text>
</comment>
<comment type="subcellular location">
    <subcellularLocation>
        <location evidence="1">Cytoplasm</location>
    </subcellularLocation>
</comment>
<comment type="similarity">
    <text evidence="2">Belongs to the DPH1/DPH2 family. DPH2 subfamily.</text>
</comment>
<organism>
    <name type="scientific">Candida albicans (strain SC5314 / ATCC MYA-2876)</name>
    <name type="common">Yeast</name>
    <dbReference type="NCBI Taxonomy" id="237561"/>
    <lineage>
        <taxon>Eukaryota</taxon>
        <taxon>Fungi</taxon>
        <taxon>Dikarya</taxon>
        <taxon>Ascomycota</taxon>
        <taxon>Saccharomycotina</taxon>
        <taxon>Pichiomycetes</taxon>
        <taxon>Debaryomycetaceae</taxon>
        <taxon>Candida/Lodderomyces clade</taxon>
        <taxon>Candida</taxon>
    </lineage>
</organism>
<sequence length="529" mass="59198">MTSETVIAPSLSTAQNDGTFTYDKVKSTAKERKHLNLKNPSDANEIKSKIWNYYSLSELIQYLGQKENDDFKYKRITLQFPDNLICDSATIVHELQRELNIVPQANQDTGESNTAQRVWILADTSYSACCVDEVAAEHVRSDLVVHFGDACLNEIDKLQAVFVLGKPTLDVDAIVKQIKTAYSTEQKVVLMSDAPHTYLLPEIAKQLPDYDILIADLPKTSRAKIIGYTPPPTGHKKFNRVFNTDTVEFGKYELFHITSPESPRLLQLTTNFASVTTYDPISGTVSTGPFPNLMRRYKYVHQARMAGTVGILVNTLSLANTKVLLNTIKEKIKEAGKKHYIFVVGKPNVAKLANFESVDIWCILGCDHQGIIIDQINEYYKPIVTPYELLLGLSDELSWTGKWVVDYKSVLEEYGNEVIQQNEDPDTDEDLPPVFDPVTGRYVSTSKPLRQINHLMVTSSEQGGVDDHDNQLVKRFSNAVAIKGTVSTSAIHLQNRHWTGLGSDYTEDENATGALVEDGRKGIARGYDI</sequence>
<evidence type="ECO:0000250" key="1">
    <source>
        <dbReference type="UniProtKB" id="P32461"/>
    </source>
</evidence>
<evidence type="ECO:0000305" key="2"/>
<accession>Q59SJ9</accession>
<accession>A0A1D8PL50</accession>
<accession>Q59JU1</accession>
<accession>Q59UP2</accession>
<feature type="chain" id="PRO_0000083384" description="2-(3-amino-3-carboxypropyl)histidine synthase subunit 2-1">
    <location>
        <begin position="1"/>
        <end position="529"/>
    </location>
</feature>
<feature type="binding site" evidence="1">
    <location>
        <position position="130"/>
    </location>
    <ligand>
        <name>[4Fe-4S] cluster</name>
        <dbReference type="ChEBI" id="CHEBI:49883"/>
    </ligand>
</feature>
<feature type="binding site" evidence="1">
    <location>
        <position position="151"/>
    </location>
    <ligand>
        <name>[4Fe-4S] cluster</name>
        <dbReference type="ChEBI" id="CHEBI:49883"/>
    </ligand>
</feature>
<feature type="binding site" evidence="1">
    <location>
        <position position="366"/>
    </location>
    <ligand>
        <name>[4Fe-4S] cluster</name>
        <dbReference type="ChEBI" id="CHEBI:49883"/>
    </ligand>
</feature>
<proteinExistence type="inferred from homology"/>
<protein>
    <recommendedName>
        <fullName evidence="1">2-(3-amino-3-carboxypropyl)histidine synthase subunit 2-1</fullName>
    </recommendedName>
    <alternativeName>
        <fullName evidence="2">Diphthamide biosynthesis protein 2-1</fullName>
    </alternativeName>
</protein>
<keyword id="KW-0963">Cytoplasm</keyword>
<keyword id="KW-0408">Iron</keyword>
<keyword id="KW-0411">Iron-sulfur</keyword>
<keyword id="KW-0479">Metal-binding</keyword>
<keyword id="KW-1185">Reference proteome</keyword>
<dbReference type="EMBL" id="CP017626">
    <property type="protein sequence ID" value="AOW28861.1"/>
    <property type="molecule type" value="Genomic_DNA"/>
</dbReference>
<dbReference type="RefSeq" id="XP_712627.2">
    <property type="nucleotide sequence ID" value="XM_707534.2"/>
</dbReference>
<dbReference type="SMR" id="Q59SJ9"/>
<dbReference type="FunCoup" id="Q59SJ9">
    <property type="interactions" value="990"/>
</dbReference>
<dbReference type="STRING" id="237561.Q59SJ9"/>
<dbReference type="PeptideAtlas" id="Q59SJ9"/>
<dbReference type="EnsemblFungi" id="C4_00690C_A-T">
    <property type="protein sequence ID" value="C4_00690C_A-T-p1"/>
    <property type="gene ID" value="C4_00690C_A"/>
</dbReference>
<dbReference type="GeneID" id="3645752"/>
<dbReference type="KEGG" id="cal:CAALFM_C400690CA"/>
<dbReference type="CGD" id="CAL0000180772">
    <property type="gene designation" value="orf19.11649"/>
</dbReference>
<dbReference type="VEuPathDB" id="FungiDB:C4_00690C_A"/>
<dbReference type="HOGENOM" id="CLU_1111240_0_0_1"/>
<dbReference type="InParanoid" id="Q59SJ9"/>
<dbReference type="OrthoDB" id="449241at2759"/>
<dbReference type="UniPathway" id="UPA00559"/>
<dbReference type="Proteomes" id="UP000000559">
    <property type="component" value="Chromosome 4"/>
</dbReference>
<dbReference type="GO" id="GO:0120513">
    <property type="term" value="C:2-(3-amino-3-carboxypropyl)histidine synthase complex"/>
    <property type="evidence" value="ECO:0000250"/>
    <property type="project" value="UniProtKB"/>
</dbReference>
<dbReference type="GO" id="GO:0005737">
    <property type="term" value="C:cytoplasm"/>
    <property type="evidence" value="ECO:0007669"/>
    <property type="project" value="UniProtKB-SubCell"/>
</dbReference>
<dbReference type="GO" id="GO:0090560">
    <property type="term" value="F:2-(3-amino-3-carboxypropyl)histidine synthase activity"/>
    <property type="evidence" value="ECO:0007669"/>
    <property type="project" value="InterPro"/>
</dbReference>
<dbReference type="GO" id="GO:0051539">
    <property type="term" value="F:4 iron, 4 sulfur cluster binding"/>
    <property type="evidence" value="ECO:0000250"/>
    <property type="project" value="UniProtKB"/>
</dbReference>
<dbReference type="GO" id="GO:0046872">
    <property type="term" value="F:metal ion binding"/>
    <property type="evidence" value="ECO:0007669"/>
    <property type="project" value="UniProtKB-KW"/>
</dbReference>
<dbReference type="GO" id="GO:0017183">
    <property type="term" value="P:protein histidyl modification to diphthamide"/>
    <property type="evidence" value="ECO:0000250"/>
    <property type="project" value="UniProtKB"/>
</dbReference>
<dbReference type="FunFam" id="3.40.50.11860:FF:000001">
    <property type="entry name" value="2-(3-amino-3-carboxypropyl)histidine synthase subunit 2"/>
    <property type="match status" value="1"/>
</dbReference>
<dbReference type="Gene3D" id="3.40.50.11840">
    <property type="entry name" value="Diphthamide synthesis DPH1/DPH2 domain 1"/>
    <property type="match status" value="1"/>
</dbReference>
<dbReference type="Gene3D" id="3.40.50.11860">
    <property type="entry name" value="Diphthamide synthesis DPH1/DPH2 domain 3"/>
    <property type="match status" value="1"/>
</dbReference>
<dbReference type="InterPro" id="IPR010014">
    <property type="entry name" value="DHP2"/>
</dbReference>
<dbReference type="InterPro" id="IPR016435">
    <property type="entry name" value="DPH1/DPH2"/>
</dbReference>
<dbReference type="InterPro" id="IPR042263">
    <property type="entry name" value="DPH1/DPH2_1"/>
</dbReference>
<dbReference type="InterPro" id="IPR042265">
    <property type="entry name" value="DPH1/DPH2_3"/>
</dbReference>
<dbReference type="NCBIfam" id="TIGR00322">
    <property type="entry name" value="diphth2_R"/>
    <property type="match status" value="1"/>
</dbReference>
<dbReference type="NCBIfam" id="TIGR00272">
    <property type="entry name" value="DPH2"/>
    <property type="match status" value="1"/>
</dbReference>
<dbReference type="PANTHER" id="PTHR10762:SF2">
    <property type="entry name" value="2-(3-AMINO-3-CARBOXYPROPYL)HISTIDINE SYNTHASE SUBUNIT 2"/>
    <property type="match status" value="1"/>
</dbReference>
<dbReference type="PANTHER" id="PTHR10762">
    <property type="entry name" value="DIPHTHAMIDE BIOSYNTHESIS PROTEIN"/>
    <property type="match status" value="1"/>
</dbReference>
<dbReference type="Pfam" id="PF01866">
    <property type="entry name" value="Diphthamide_syn"/>
    <property type="match status" value="1"/>
</dbReference>
<dbReference type="SFLD" id="SFLDG01121">
    <property type="entry name" value="Diphthamide_biosynthesis"/>
    <property type="match status" value="1"/>
</dbReference>
<dbReference type="SFLD" id="SFLDF00408">
    <property type="entry name" value="Diphthamide_biosynthesis_famil"/>
    <property type="match status" value="1"/>
</dbReference>
<dbReference type="SFLD" id="SFLDS00032">
    <property type="entry name" value="Radical_SAM_3-amino-3-carboxyp"/>
    <property type="match status" value="1"/>
</dbReference>
<reference key="1">
    <citation type="journal article" date="2004" name="Proc. Natl. Acad. Sci. U.S.A.">
        <title>The diploid genome sequence of Candida albicans.</title>
        <authorList>
            <person name="Jones T."/>
            <person name="Federspiel N.A."/>
            <person name="Chibana H."/>
            <person name="Dungan J."/>
            <person name="Kalman S."/>
            <person name="Magee B.B."/>
            <person name="Newport G."/>
            <person name="Thorstenson Y.R."/>
            <person name="Agabian N."/>
            <person name="Magee P.T."/>
            <person name="Davis R.W."/>
            <person name="Scherer S."/>
        </authorList>
    </citation>
    <scope>NUCLEOTIDE SEQUENCE [LARGE SCALE GENOMIC DNA]</scope>
    <source>
        <strain>SC5314 / ATCC MYA-2876</strain>
    </source>
</reference>
<reference key="2">
    <citation type="journal article" date="2007" name="Genome Biol.">
        <title>Assembly of the Candida albicans genome into sixteen supercontigs aligned on the eight chromosomes.</title>
        <authorList>
            <person name="van het Hoog M."/>
            <person name="Rast T.J."/>
            <person name="Martchenko M."/>
            <person name="Grindle S."/>
            <person name="Dignard D."/>
            <person name="Hogues H."/>
            <person name="Cuomo C."/>
            <person name="Berriman M."/>
            <person name="Scherer S."/>
            <person name="Magee B.B."/>
            <person name="Whiteway M."/>
            <person name="Chibana H."/>
            <person name="Nantel A."/>
            <person name="Magee P.T."/>
        </authorList>
    </citation>
    <scope>GENOME REANNOTATION</scope>
    <source>
        <strain>SC5314 / ATCC MYA-2876</strain>
    </source>
</reference>
<reference key="3">
    <citation type="journal article" date="2013" name="Genome Biol.">
        <title>Assembly of a phased diploid Candida albicans genome facilitates allele-specific measurements and provides a simple model for repeat and indel structure.</title>
        <authorList>
            <person name="Muzzey D."/>
            <person name="Schwartz K."/>
            <person name="Weissman J.S."/>
            <person name="Sherlock G."/>
        </authorList>
    </citation>
    <scope>NUCLEOTIDE SEQUENCE [LARGE SCALE GENOMIC DNA]</scope>
    <scope>GENOME REANNOTATION</scope>
    <source>
        <strain>SC5314 / ATCC MYA-2876</strain>
    </source>
</reference>
<name>DPH21_CANAL</name>
<gene>
    <name type="primary">DPH2</name>
    <name type="ordered locus">CAALFM_C400690CA</name>
    <name type="ORF">CaO19.11649</name>
    <name type="ORF">CaO19.1174</name>
    <name type="ORF">CaO19.4173</name>
</gene>